<protein>
    <recommendedName>
        <fullName evidence="1">Ion-translocating oxidoreductase complex subunit A</fullName>
        <ecNumber evidence="1">7.-.-.-</ecNumber>
    </recommendedName>
    <alternativeName>
        <fullName evidence="1">Rnf electron transport complex subunit A</fullName>
    </alternativeName>
</protein>
<proteinExistence type="inferred from homology"/>
<keyword id="KW-0997">Cell inner membrane</keyword>
<keyword id="KW-1003">Cell membrane</keyword>
<keyword id="KW-0249">Electron transport</keyword>
<keyword id="KW-0472">Membrane</keyword>
<keyword id="KW-1185">Reference proteome</keyword>
<keyword id="KW-1278">Translocase</keyword>
<keyword id="KW-0812">Transmembrane</keyword>
<keyword id="KW-1133">Transmembrane helix</keyword>
<keyword id="KW-0813">Transport</keyword>
<sequence>MTHYILLIIGTALINNFVLVKFLGLCPFMGVSKKIETAVGMGLATMFVLTVASLCAYLVDHYILIPLNATFLRTLVFILVIAVVVQFTEMAINKTSPTLYRLLGIFLPLITTNCAVLGVALLNVNLAHNLTESVVYGFGASLGFSLVLVLFAALRERLVAADIPATFRGSSIALITAGLMSLAFMGFTGLVK</sequence>
<organism>
    <name type="scientific">Haemophilus influenzae (strain ATCC 51907 / DSM 11121 / KW20 / Rd)</name>
    <dbReference type="NCBI Taxonomy" id="71421"/>
    <lineage>
        <taxon>Bacteria</taxon>
        <taxon>Pseudomonadati</taxon>
        <taxon>Pseudomonadota</taxon>
        <taxon>Gammaproteobacteria</taxon>
        <taxon>Pasteurellales</taxon>
        <taxon>Pasteurellaceae</taxon>
        <taxon>Haemophilus</taxon>
    </lineage>
</organism>
<feature type="chain" id="PRO_0000214293" description="Ion-translocating oxidoreductase complex subunit A">
    <location>
        <begin position="1"/>
        <end position="192"/>
    </location>
</feature>
<feature type="transmembrane region" description="Helical" evidence="1">
    <location>
        <begin position="5"/>
        <end position="25"/>
    </location>
</feature>
<feature type="transmembrane region" description="Helical" evidence="1">
    <location>
        <begin position="39"/>
        <end position="59"/>
    </location>
</feature>
<feature type="transmembrane region" description="Helical" evidence="1">
    <location>
        <begin position="63"/>
        <end position="83"/>
    </location>
</feature>
<feature type="transmembrane region" description="Helical" evidence="1">
    <location>
        <begin position="102"/>
        <end position="122"/>
    </location>
</feature>
<feature type="transmembrane region" description="Helical" evidence="1">
    <location>
        <begin position="134"/>
        <end position="154"/>
    </location>
</feature>
<feature type="transmembrane region" description="Helical" evidence="1">
    <location>
        <begin position="171"/>
        <end position="191"/>
    </location>
</feature>
<dbReference type="EC" id="7.-.-.-" evidence="1"/>
<dbReference type="EMBL" id="L42023">
    <property type="protein sequence ID" value="AAC23329.1"/>
    <property type="molecule type" value="Genomic_DNA"/>
</dbReference>
<dbReference type="RefSeq" id="NP_439825.1">
    <property type="nucleotide sequence ID" value="NC_000907.1"/>
</dbReference>
<dbReference type="SMR" id="P71395"/>
<dbReference type="STRING" id="71421.HI_1683"/>
<dbReference type="EnsemblBacteria" id="AAC23329">
    <property type="protein sequence ID" value="AAC23329"/>
    <property type="gene ID" value="HI_1683"/>
</dbReference>
<dbReference type="KEGG" id="hin:HI_1683"/>
<dbReference type="PATRIC" id="fig|71421.8.peg.1762"/>
<dbReference type="eggNOG" id="COG4657">
    <property type="taxonomic scope" value="Bacteria"/>
</dbReference>
<dbReference type="HOGENOM" id="CLU_095255_1_0_6"/>
<dbReference type="OrthoDB" id="9803631at2"/>
<dbReference type="PhylomeDB" id="P71395"/>
<dbReference type="BioCyc" id="HINF71421:G1GJ1-1699-MONOMER"/>
<dbReference type="Proteomes" id="UP000000579">
    <property type="component" value="Chromosome"/>
</dbReference>
<dbReference type="GO" id="GO:0005886">
    <property type="term" value="C:plasma membrane"/>
    <property type="evidence" value="ECO:0000318"/>
    <property type="project" value="GO_Central"/>
</dbReference>
<dbReference type="GO" id="GO:0022900">
    <property type="term" value="P:electron transport chain"/>
    <property type="evidence" value="ECO:0007669"/>
    <property type="project" value="UniProtKB-UniRule"/>
</dbReference>
<dbReference type="HAMAP" id="MF_00459">
    <property type="entry name" value="RsxA_RnfA"/>
    <property type="match status" value="1"/>
</dbReference>
<dbReference type="InterPro" id="IPR011293">
    <property type="entry name" value="Ion_transpt_RnfA/RsxA"/>
</dbReference>
<dbReference type="InterPro" id="IPR003667">
    <property type="entry name" value="NqrDE/RnfAE"/>
</dbReference>
<dbReference type="InterPro" id="IPR050133">
    <property type="entry name" value="NqrDE/RnfAE_oxidrdctase"/>
</dbReference>
<dbReference type="NCBIfam" id="NF003481">
    <property type="entry name" value="PRK05151.1"/>
    <property type="match status" value="1"/>
</dbReference>
<dbReference type="NCBIfam" id="TIGR01943">
    <property type="entry name" value="rnfA"/>
    <property type="match status" value="1"/>
</dbReference>
<dbReference type="PANTHER" id="PTHR30335">
    <property type="entry name" value="INTEGRAL MEMBRANE PROTEIN OF SOXR-REDUCING COMPLEX"/>
    <property type="match status" value="1"/>
</dbReference>
<dbReference type="PANTHER" id="PTHR30335:SF0">
    <property type="entry name" value="ION-TRANSLOCATING OXIDOREDUCTASE COMPLEX SUBUNIT A"/>
    <property type="match status" value="1"/>
</dbReference>
<dbReference type="Pfam" id="PF02508">
    <property type="entry name" value="Rnf-Nqr"/>
    <property type="match status" value="1"/>
</dbReference>
<dbReference type="PIRSF" id="PIRSF006102">
    <property type="entry name" value="NQR_DE"/>
    <property type="match status" value="1"/>
</dbReference>
<comment type="function">
    <text evidence="1">Part of a membrane-bound complex that couples electron transfer with translocation of ions across the membrane.</text>
</comment>
<comment type="subunit">
    <text evidence="1">The complex is composed of six subunits: RnfA, RnfB, RnfC, RnfD, RnfE and RnfG.</text>
</comment>
<comment type="subcellular location">
    <subcellularLocation>
        <location evidence="1">Cell inner membrane</location>
        <topology evidence="1">Multi-pass membrane protein</topology>
    </subcellularLocation>
</comment>
<comment type="similarity">
    <text evidence="1">Belongs to the NqrDE/RnfAE family.</text>
</comment>
<reference key="1">
    <citation type="journal article" date="1995" name="Science">
        <title>Whole-genome random sequencing and assembly of Haemophilus influenzae Rd.</title>
        <authorList>
            <person name="Fleischmann R.D."/>
            <person name="Adams M.D."/>
            <person name="White O."/>
            <person name="Clayton R.A."/>
            <person name="Kirkness E.F."/>
            <person name="Kerlavage A.R."/>
            <person name="Bult C.J."/>
            <person name="Tomb J.-F."/>
            <person name="Dougherty B.A."/>
            <person name="Merrick J.M."/>
            <person name="McKenney K."/>
            <person name="Sutton G.G."/>
            <person name="FitzHugh W."/>
            <person name="Fields C.A."/>
            <person name="Gocayne J.D."/>
            <person name="Scott J.D."/>
            <person name="Shirley R."/>
            <person name="Liu L.-I."/>
            <person name="Glodek A."/>
            <person name="Kelley J.M."/>
            <person name="Weidman J.F."/>
            <person name="Phillips C.A."/>
            <person name="Spriggs T."/>
            <person name="Hedblom E."/>
            <person name="Cotton M.D."/>
            <person name="Utterback T.R."/>
            <person name="Hanna M.C."/>
            <person name="Nguyen D.T."/>
            <person name="Saudek D.M."/>
            <person name="Brandon R.C."/>
            <person name="Fine L.D."/>
            <person name="Fritchman J.L."/>
            <person name="Fuhrmann J.L."/>
            <person name="Geoghagen N.S.M."/>
            <person name="Gnehm C.L."/>
            <person name="McDonald L.A."/>
            <person name="Small K.V."/>
            <person name="Fraser C.M."/>
            <person name="Smith H.O."/>
            <person name="Venter J.C."/>
        </authorList>
    </citation>
    <scope>NUCLEOTIDE SEQUENCE [LARGE SCALE GENOMIC DNA]</scope>
    <source>
        <strain>ATCC 51907 / DSM 11121 / KW20 / Rd</strain>
    </source>
</reference>
<name>RNFA_HAEIN</name>
<gene>
    <name evidence="1" type="primary">rnfA</name>
    <name type="ordered locus">HI_1683</name>
</gene>
<evidence type="ECO:0000255" key="1">
    <source>
        <dbReference type="HAMAP-Rule" id="MF_00459"/>
    </source>
</evidence>
<accession>P71395</accession>